<sequence length="210" mass="22207">MSLGLVGRKCGMTRIFTEDGVSIPVTVVQVESNKVTQIKTTETDGYNAIQVTTGFKKRSNVNKPMAGHYAKASVEPGRGLWEFAIDNASDYEVGASIDATIFEAGQKVDVRGVSKGKGFQGGVKRHNFATQDATHGNSLSHRVHGSTGQNQTPGRVFKNKKMAGHLGSENVTIQSLEVVRVDAENGLLLLKGGIPGSVGGDVIVTPAVKS</sequence>
<feature type="chain" id="PRO_1000086441" description="Large ribosomal subunit protein uL3">
    <location>
        <begin position="1"/>
        <end position="210"/>
    </location>
</feature>
<feature type="region of interest" description="Disordered" evidence="2">
    <location>
        <begin position="133"/>
        <end position="152"/>
    </location>
</feature>
<feature type="modified residue" description="N5-methylglutamine" evidence="1">
    <location>
        <position position="151"/>
    </location>
</feature>
<dbReference type="EMBL" id="CP000937">
    <property type="protein sequence ID" value="ABZ86805.1"/>
    <property type="molecule type" value="Genomic_DNA"/>
</dbReference>
<dbReference type="SMR" id="B0U0Y9"/>
<dbReference type="KEGG" id="fph:Fphi_0586"/>
<dbReference type="eggNOG" id="COG0087">
    <property type="taxonomic scope" value="Bacteria"/>
</dbReference>
<dbReference type="HOGENOM" id="CLU_044142_4_1_6"/>
<dbReference type="GO" id="GO:0022625">
    <property type="term" value="C:cytosolic large ribosomal subunit"/>
    <property type="evidence" value="ECO:0007669"/>
    <property type="project" value="TreeGrafter"/>
</dbReference>
<dbReference type="GO" id="GO:0019843">
    <property type="term" value="F:rRNA binding"/>
    <property type="evidence" value="ECO:0007669"/>
    <property type="project" value="UniProtKB-UniRule"/>
</dbReference>
<dbReference type="GO" id="GO:0003735">
    <property type="term" value="F:structural constituent of ribosome"/>
    <property type="evidence" value="ECO:0007669"/>
    <property type="project" value="InterPro"/>
</dbReference>
<dbReference type="GO" id="GO:0006412">
    <property type="term" value="P:translation"/>
    <property type="evidence" value="ECO:0007669"/>
    <property type="project" value="UniProtKB-UniRule"/>
</dbReference>
<dbReference type="FunFam" id="2.40.30.10:FF:000004">
    <property type="entry name" value="50S ribosomal protein L3"/>
    <property type="match status" value="1"/>
</dbReference>
<dbReference type="FunFam" id="3.30.160.810:FF:000001">
    <property type="entry name" value="50S ribosomal protein L3"/>
    <property type="match status" value="1"/>
</dbReference>
<dbReference type="Gene3D" id="3.30.160.810">
    <property type="match status" value="1"/>
</dbReference>
<dbReference type="Gene3D" id="2.40.30.10">
    <property type="entry name" value="Translation factors"/>
    <property type="match status" value="1"/>
</dbReference>
<dbReference type="HAMAP" id="MF_01325_B">
    <property type="entry name" value="Ribosomal_uL3_B"/>
    <property type="match status" value="1"/>
</dbReference>
<dbReference type="InterPro" id="IPR000597">
    <property type="entry name" value="Ribosomal_uL3"/>
</dbReference>
<dbReference type="InterPro" id="IPR019927">
    <property type="entry name" value="Ribosomal_uL3_bac/org-type"/>
</dbReference>
<dbReference type="InterPro" id="IPR019926">
    <property type="entry name" value="Ribosomal_uL3_CS"/>
</dbReference>
<dbReference type="InterPro" id="IPR009000">
    <property type="entry name" value="Transl_B-barrel_sf"/>
</dbReference>
<dbReference type="NCBIfam" id="TIGR03625">
    <property type="entry name" value="L3_bact"/>
    <property type="match status" value="1"/>
</dbReference>
<dbReference type="PANTHER" id="PTHR11229">
    <property type="entry name" value="50S RIBOSOMAL PROTEIN L3"/>
    <property type="match status" value="1"/>
</dbReference>
<dbReference type="PANTHER" id="PTHR11229:SF16">
    <property type="entry name" value="LARGE RIBOSOMAL SUBUNIT PROTEIN UL3C"/>
    <property type="match status" value="1"/>
</dbReference>
<dbReference type="Pfam" id="PF00297">
    <property type="entry name" value="Ribosomal_L3"/>
    <property type="match status" value="1"/>
</dbReference>
<dbReference type="SUPFAM" id="SSF50447">
    <property type="entry name" value="Translation proteins"/>
    <property type="match status" value="1"/>
</dbReference>
<dbReference type="PROSITE" id="PS00474">
    <property type="entry name" value="RIBOSOMAL_L3"/>
    <property type="match status" value="1"/>
</dbReference>
<name>RL3_FRAP2</name>
<gene>
    <name evidence="1" type="primary">rplC</name>
    <name type="ordered locus">Fphi_0586</name>
</gene>
<proteinExistence type="inferred from homology"/>
<accession>B0U0Y9</accession>
<comment type="function">
    <text evidence="1">One of the primary rRNA binding proteins, it binds directly near the 3'-end of the 23S rRNA, where it nucleates assembly of the 50S subunit.</text>
</comment>
<comment type="subunit">
    <text evidence="1">Part of the 50S ribosomal subunit. Forms a cluster with proteins L14 and L19.</text>
</comment>
<comment type="PTM">
    <text evidence="1">Methylated by PrmB.</text>
</comment>
<comment type="similarity">
    <text evidence="1">Belongs to the universal ribosomal protein uL3 family.</text>
</comment>
<evidence type="ECO:0000255" key="1">
    <source>
        <dbReference type="HAMAP-Rule" id="MF_01325"/>
    </source>
</evidence>
<evidence type="ECO:0000256" key="2">
    <source>
        <dbReference type="SAM" id="MobiDB-lite"/>
    </source>
</evidence>
<evidence type="ECO:0000305" key="3"/>
<organism>
    <name type="scientific">Francisella philomiragia subsp. philomiragia (strain ATCC 25017 / CCUG 19701 / FSC 153 / O#319-036)</name>
    <dbReference type="NCBI Taxonomy" id="484022"/>
    <lineage>
        <taxon>Bacteria</taxon>
        <taxon>Pseudomonadati</taxon>
        <taxon>Pseudomonadota</taxon>
        <taxon>Gammaproteobacteria</taxon>
        <taxon>Thiotrichales</taxon>
        <taxon>Francisellaceae</taxon>
        <taxon>Francisella</taxon>
    </lineage>
</organism>
<protein>
    <recommendedName>
        <fullName evidence="1">Large ribosomal subunit protein uL3</fullName>
    </recommendedName>
    <alternativeName>
        <fullName evidence="3">50S ribosomal protein L3</fullName>
    </alternativeName>
</protein>
<reference key="1">
    <citation type="submission" date="2007-12" db="EMBL/GenBank/DDBJ databases">
        <title>Complete sequence of chromosome of Francisella philomiragia subsp. philomiragia ATCC 25017.</title>
        <authorList>
            <consortium name="US DOE Joint Genome Institute"/>
            <person name="Copeland A."/>
            <person name="Lucas S."/>
            <person name="Lapidus A."/>
            <person name="Barry K."/>
            <person name="Detter J.C."/>
            <person name="Glavina del Rio T."/>
            <person name="Hammon N."/>
            <person name="Israni S."/>
            <person name="Dalin E."/>
            <person name="Tice H."/>
            <person name="Pitluck S."/>
            <person name="Chain P."/>
            <person name="Malfatti S."/>
            <person name="Shin M."/>
            <person name="Vergez L."/>
            <person name="Schmutz J."/>
            <person name="Larimer F."/>
            <person name="Land M."/>
            <person name="Hauser L."/>
            <person name="Richardson P."/>
        </authorList>
    </citation>
    <scope>NUCLEOTIDE SEQUENCE [LARGE SCALE GENOMIC DNA]</scope>
    <source>
        <strain>ATCC 25017 / CCUG 19701 / FSC 153 / O#319-036</strain>
    </source>
</reference>
<keyword id="KW-0488">Methylation</keyword>
<keyword id="KW-0687">Ribonucleoprotein</keyword>
<keyword id="KW-0689">Ribosomal protein</keyword>
<keyword id="KW-0694">RNA-binding</keyword>
<keyword id="KW-0699">rRNA-binding</keyword>